<comment type="function">
    <text evidence="1 5 6 9">Intracellular carrier for long-chain fatty acids and related active lipids, such as endocannabinoids, that regulate the metabolism and actions of the ligands they bind. In addition to the cytosolic transport, selectively delivers specific fatty acids from the cytosol to the nucleus, wherein they activate nuclear receptors (PubMed:21395585, PubMed:22170058). Delivers retinoic acid to the nuclear receptor peroxisome proliferator-activated receptor delta; which promotes proliferation and survival. May also serve as a synaptic carrier of endocannabinoid at central synapses and thus controls retrograde endocannabinoid signaling. Modulates inflammation by regulating PTGES induction via NF-kappa-B activation, and prostaglandin E2 (PGE2) biosynthesis during inflammation (By similarity). May be involved in keratinocyte differentiation (PubMed:8092987).</text>
</comment>
<comment type="catalytic activity">
    <reaction evidence="5">
        <text>hexadecanoate(out) = hexadecanoate(in)</text>
        <dbReference type="Rhea" id="RHEA:45256"/>
        <dbReference type="ChEBI" id="CHEBI:7896"/>
    </reaction>
</comment>
<comment type="catalytic activity">
    <reaction evidence="5">
        <text>(9Z,12Z)-octadecadienoate(out) = (9Z,12Z)-octadecadienoate(in)</text>
        <dbReference type="Rhea" id="RHEA:45264"/>
        <dbReference type="ChEBI" id="CHEBI:30245"/>
    </reaction>
</comment>
<comment type="catalytic activity">
    <reaction evidence="5">
        <text>(9Z)-octadecenoate(out) = (9Z)-octadecenoate(in)</text>
        <dbReference type="Rhea" id="RHEA:33655"/>
        <dbReference type="ChEBI" id="CHEBI:30823"/>
    </reaction>
</comment>
<comment type="subunit">
    <text evidence="7">Monomer. Homodimer.</text>
</comment>
<comment type="subcellular location">
    <subcellularLocation>
        <location evidence="8 9">Cytoplasm</location>
    </subcellularLocation>
    <subcellularLocation>
        <location evidence="8">Nucleus</location>
    </subcellularLocation>
    <subcellularLocation>
        <location evidence="1">Synapse</location>
    </subcellularLocation>
    <subcellularLocation>
        <location evidence="1">Postsynaptic density</location>
    </subcellularLocation>
    <subcellularLocation>
        <location evidence="1">Secreted</location>
    </subcellularLocation>
    <text evidence="1 8">Localizes primarily to the cytoplasm. Upon certain ligand binding, a conformation change exposes a nuclear localization motif and the protein is transported into nucleus (PubMed:24692551). Secreted by astrocytes, but not by neurons (By similarity).</text>
</comment>
<comment type="tissue specificity">
    <text evidence="5 9">Keratinocytes; highly expressed in psoriatic skin (PubMed:8092987). Expressed in brain gray matter (PubMed:21395585).</text>
</comment>
<comment type="domain">
    <text>Forms a beta-barrel structure that accommodates the hydrophobic ligand in its interior.</text>
</comment>
<comment type="similarity">
    <text evidence="11">Belongs to the calycin superfamily. Fatty-acid binding protein (FABP) family.</text>
</comment>
<comment type="caution">
    <text evidence="7">While mouse FABP5 is found only in the monomeric form, human FABP5 can exist as a monomer as well as a domain-swapped dimer.</text>
</comment>
<dbReference type="EMBL" id="M94856">
    <property type="protein sequence ID" value="AAA58467.1"/>
    <property type="molecule type" value="mRNA"/>
</dbReference>
<dbReference type="EMBL" id="BT007449">
    <property type="protein sequence ID" value="AAP36117.1"/>
    <property type="molecule type" value="mRNA"/>
</dbReference>
<dbReference type="EMBL" id="AK311856">
    <property type="protein sequence ID" value="BAG34797.1"/>
    <property type="molecule type" value="mRNA"/>
</dbReference>
<dbReference type="EMBL" id="CH471068">
    <property type="protein sequence ID" value="EAW87088.1"/>
    <property type="molecule type" value="Genomic_DNA"/>
</dbReference>
<dbReference type="EMBL" id="BC019385">
    <property type="protein sequence ID" value="AAH19385.1"/>
    <property type="molecule type" value="mRNA"/>
</dbReference>
<dbReference type="EMBL" id="BC070303">
    <property type="protein sequence ID" value="AAH70303.1"/>
    <property type="molecule type" value="mRNA"/>
</dbReference>
<dbReference type="CCDS" id="CCDS6228.1"/>
<dbReference type="PIR" id="I56326">
    <property type="entry name" value="I56326"/>
</dbReference>
<dbReference type="RefSeq" id="NP_001435.1">
    <property type="nucleotide sequence ID" value="NM_001444.3"/>
</dbReference>
<dbReference type="PDB" id="1B56">
    <property type="method" value="X-ray"/>
    <property type="resolution" value="2.05 A"/>
    <property type="chains" value="A=1-135"/>
</dbReference>
<dbReference type="PDB" id="1JJJ">
    <property type="method" value="NMR"/>
    <property type="chains" value="A=1-135"/>
</dbReference>
<dbReference type="PDB" id="4AZM">
    <property type="method" value="X-ray"/>
    <property type="resolution" value="2.75 A"/>
    <property type="chains" value="A/B=1-135"/>
</dbReference>
<dbReference type="PDB" id="4AZR">
    <property type="method" value="X-ray"/>
    <property type="resolution" value="2.95 A"/>
    <property type="chains" value="A/B=1-135"/>
</dbReference>
<dbReference type="PDB" id="4LKP">
    <property type="method" value="X-ray"/>
    <property type="resolution" value="1.67 A"/>
    <property type="chains" value="A=1-135"/>
</dbReference>
<dbReference type="PDB" id="4LKT">
    <property type="method" value="X-ray"/>
    <property type="resolution" value="2.57 A"/>
    <property type="chains" value="A/B/C/D=1-135"/>
</dbReference>
<dbReference type="PDB" id="5HZ5">
    <property type="method" value="X-ray"/>
    <property type="resolution" value="1.40 A"/>
    <property type="chains" value="A=2-135"/>
</dbReference>
<dbReference type="PDB" id="5UR9">
    <property type="method" value="X-ray"/>
    <property type="resolution" value="2.20 A"/>
    <property type="chains" value="A/B/C/D/E/F/G/H=1-135"/>
</dbReference>
<dbReference type="PDB" id="7FWI">
    <property type="method" value="X-ray"/>
    <property type="resolution" value="2.00 A"/>
    <property type="chains" value="A/B/C=1-135"/>
</dbReference>
<dbReference type="PDB" id="7FXD">
    <property type="method" value="X-ray"/>
    <property type="resolution" value="2.44 A"/>
    <property type="chains" value="A=1-135"/>
</dbReference>
<dbReference type="PDB" id="7FY0">
    <property type="method" value="X-ray"/>
    <property type="resolution" value="1.34 A"/>
    <property type="chains" value="A=1-135"/>
</dbReference>
<dbReference type="PDB" id="7FYD">
    <property type="method" value="X-ray"/>
    <property type="resolution" value="1.45 A"/>
    <property type="chains" value="A=1-135"/>
</dbReference>
<dbReference type="PDB" id="7G01">
    <property type="method" value="X-ray"/>
    <property type="resolution" value="1.17 A"/>
    <property type="chains" value="A=1-135"/>
</dbReference>
<dbReference type="PDB" id="7G04">
    <property type="method" value="X-ray"/>
    <property type="resolution" value="1.40 A"/>
    <property type="chains" value="A/B=1-135"/>
</dbReference>
<dbReference type="PDB" id="7G0B">
    <property type="method" value="X-ray"/>
    <property type="resolution" value="1.47 A"/>
    <property type="chains" value="A=1-135"/>
</dbReference>
<dbReference type="PDB" id="7G0E">
    <property type="method" value="X-ray"/>
    <property type="resolution" value="1.11 A"/>
    <property type="chains" value="A=1-135"/>
</dbReference>
<dbReference type="PDB" id="7G1Q">
    <property type="method" value="X-ray"/>
    <property type="resolution" value="1.24 A"/>
    <property type="chains" value="A=1-135"/>
</dbReference>
<dbReference type="PDBsum" id="1B56"/>
<dbReference type="PDBsum" id="1JJJ"/>
<dbReference type="PDBsum" id="4AZM"/>
<dbReference type="PDBsum" id="4AZR"/>
<dbReference type="PDBsum" id="4LKP"/>
<dbReference type="PDBsum" id="4LKT"/>
<dbReference type="PDBsum" id="5HZ5"/>
<dbReference type="PDBsum" id="5UR9"/>
<dbReference type="PDBsum" id="7FWI"/>
<dbReference type="PDBsum" id="7FXD"/>
<dbReference type="PDBsum" id="7FY0"/>
<dbReference type="PDBsum" id="7FYD"/>
<dbReference type="PDBsum" id="7G01"/>
<dbReference type="PDBsum" id="7G04"/>
<dbReference type="PDBsum" id="7G0B"/>
<dbReference type="PDBsum" id="7G0E"/>
<dbReference type="PDBsum" id="7G1Q"/>
<dbReference type="SMR" id="Q01469"/>
<dbReference type="BioGRID" id="108469">
    <property type="interactions" value="149"/>
</dbReference>
<dbReference type="FunCoup" id="Q01469">
    <property type="interactions" value="250"/>
</dbReference>
<dbReference type="IntAct" id="Q01469">
    <property type="interactions" value="38"/>
</dbReference>
<dbReference type="MINT" id="Q01469"/>
<dbReference type="STRING" id="9606.ENSP00000297258"/>
<dbReference type="BindingDB" id="Q01469"/>
<dbReference type="ChEMBL" id="CHEMBL3674"/>
<dbReference type="DrugBank" id="DB03851">
    <property type="generic name" value="Carbazole Butanoic Acid"/>
</dbReference>
<dbReference type="DrugBank" id="DB03796">
    <property type="generic name" value="Palmitic Acid"/>
</dbReference>
<dbReference type="DrugCentral" id="Q01469"/>
<dbReference type="GuidetoPHARMACOLOGY" id="2535"/>
<dbReference type="SwissLipids" id="SLP:000001104"/>
<dbReference type="TCDB" id="8.A.33.1.1">
    <property type="family name" value="the fatty acid binding protein (fabp) family"/>
</dbReference>
<dbReference type="GlyGen" id="Q01469">
    <property type="glycosylation" value="1 site, 1 O-linked glycan (1 site)"/>
</dbReference>
<dbReference type="iPTMnet" id="Q01469"/>
<dbReference type="MetOSite" id="Q01469"/>
<dbReference type="PhosphoSitePlus" id="Q01469"/>
<dbReference type="SwissPalm" id="Q01469"/>
<dbReference type="BioMuta" id="FABP5"/>
<dbReference type="DMDM" id="232081"/>
<dbReference type="jPOST" id="Q01469"/>
<dbReference type="MassIVE" id="Q01469"/>
<dbReference type="PaxDb" id="9606-ENSP00000297258"/>
<dbReference type="PeptideAtlas" id="Q01469"/>
<dbReference type="PRIDE" id="Q01469"/>
<dbReference type="ProteomicsDB" id="57957"/>
<dbReference type="TopDownProteomics" id="Q01469"/>
<dbReference type="Antibodypedia" id="25313">
    <property type="antibodies" value="426 antibodies from 37 providers"/>
</dbReference>
<dbReference type="CPTC" id="Q01469">
    <property type="antibodies" value="3 antibodies"/>
</dbReference>
<dbReference type="DNASU" id="2171"/>
<dbReference type="Ensembl" id="ENST00000297258.11">
    <property type="protein sequence ID" value="ENSP00000297258.6"/>
    <property type="gene ID" value="ENSG00000164687.11"/>
</dbReference>
<dbReference type="GeneID" id="2171"/>
<dbReference type="KEGG" id="hsa:2171"/>
<dbReference type="MANE-Select" id="ENST00000297258.11">
    <property type="protein sequence ID" value="ENSP00000297258.6"/>
    <property type="RefSeq nucleotide sequence ID" value="NM_001444.3"/>
    <property type="RefSeq protein sequence ID" value="NP_001435.1"/>
</dbReference>
<dbReference type="UCSC" id="uc003yca.3">
    <property type="organism name" value="human"/>
</dbReference>
<dbReference type="AGR" id="HGNC:3560"/>
<dbReference type="CTD" id="2171"/>
<dbReference type="DisGeNET" id="2171"/>
<dbReference type="GeneCards" id="FABP5"/>
<dbReference type="HGNC" id="HGNC:3560">
    <property type="gene designation" value="FABP5"/>
</dbReference>
<dbReference type="HPA" id="ENSG00000164687">
    <property type="expression patterns" value="Tissue enhanced (choroid plexus, esophagus, vagina)"/>
</dbReference>
<dbReference type="MalaCards" id="FABP5"/>
<dbReference type="MIM" id="605168">
    <property type="type" value="gene"/>
</dbReference>
<dbReference type="neXtProt" id="NX_Q01469"/>
<dbReference type="OpenTargets" id="ENSG00000164687"/>
<dbReference type="PharmGKB" id="PA27961"/>
<dbReference type="VEuPathDB" id="HostDB:ENSG00000164687"/>
<dbReference type="eggNOG" id="KOG4015">
    <property type="taxonomic scope" value="Eukaryota"/>
</dbReference>
<dbReference type="GeneTree" id="ENSGT00940000154530"/>
<dbReference type="HOGENOM" id="CLU_113772_0_0_1"/>
<dbReference type="InParanoid" id="Q01469"/>
<dbReference type="OMA" id="KMGNMAK"/>
<dbReference type="OrthoDB" id="412780at2759"/>
<dbReference type="PAN-GO" id="Q01469">
    <property type="GO annotations" value="4 GO annotations based on evolutionary models"/>
</dbReference>
<dbReference type="PhylomeDB" id="Q01469"/>
<dbReference type="TreeFam" id="TF316894"/>
<dbReference type="PathwayCommons" id="Q01469"/>
<dbReference type="Reactome" id="R-HSA-163560">
    <property type="pathway name" value="Triglyceride catabolism"/>
</dbReference>
<dbReference type="Reactome" id="R-HSA-5362517">
    <property type="pathway name" value="Signaling by Retinoic Acid"/>
</dbReference>
<dbReference type="Reactome" id="R-HSA-6798695">
    <property type="pathway name" value="Neutrophil degranulation"/>
</dbReference>
<dbReference type="Reactome" id="R-HSA-9725554">
    <property type="pathway name" value="Differentiation of Keratinocytes in Interfollicular Epidermis in Mammalian Skin"/>
</dbReference>
<dbReference type="SignaLink" id="Q01469"/>
<dbReference type="SIGNOR" id="Q01469"/>
<dbReference type="BioGRID-ORCS" id="2171">
    <property type="hits" value="46 hits in 1034 CRISPR screens"/>
</dbReference>
<dbReference type="CD-CODE" id="232F8A39">
    <property type="entry name" value="P-body"/>
</dbReference>
<dbReference type="CD-CODE" id="91857CE7">
    <property type="entry name" value="Nucleolus"/>
</dbReference>
<dbReference type="CD-CODE" id="DEE660B4">
    <property type="entry name" value="Stress granule"/>
</dbReference>
<dbReference type="ChiTaRS" id="FABP5">
    <property type="organism name" value="human"/>
</dbReference>
<dbReference type="EvolutionaryTrace" id="Q01469"/>
<dbReference type="GeneWiki" id="FABP5"/>
<dbReference type="GenomeRNAi" id="2171"/>
<dbReference type="Pharos" id="Q01469">
    <property type="development level" value="Tchem"/>
</dbReference>
<dbReference type="PRO" id="PR:Q01469"/>
<dbReference type="Proteomes" id="UP000005640">
    <property type="component" value="Chromosome 8"/>
</dbReference>
<dbReference type="RNAct" id="Q01469">
    <property type="molecule type" value="protein"/>
</dbReference>
<dbReference type="Bgee" id="ENSG00000164687">
    <property type="expression patterns" value="Expressed in lower esophagus mucosa and 99 other cell types or tissues"/>
</dbReference>
<dbReference type="ExpressionAtlas" id="Q01469">
    <property type="expression patterns" value="baseline and differential"/>
</dbReference>
<dbReference type="GO" id="GO:0035578">
    <property type="term" value="C:azurophil granule lumen"/>
    <property type="evidence" value="ECO:0000304"/>
    <property type="project" value="Reactome"/>
</dbReference>
<dbReference type="GO" id="GO:0005737">
    <property type="term" value="C:cytoplasm"/>
    <property type="evidence" value="ECO:0000314"/>
    <property type="project" value="UniProtKB"/>
</dbReference>
<dbReference type="GO" id="GO:0005829">
    <property type="term" value="C:cytosol"/>
    <property type="evidence" value="ECO:0000318"/>
    <property type="project" value="GO_Central"/>
</dbReference>
<dbReference type="GO" id="GO:0070062">
    <property type="term" value="C:extracellular exosome"/>
    <property type="evidence" value="ECO:0007005"/>
    <property type="project" value="UniProtKB"/>
</dbReference>
<dbReference type="GO" id="GO:0005576">
    <property type="term" value="C:extracellular region"/>
    <property type="evidence" value="ECO:0000304"/>
    <property type="project" value="Reactome"/>
</dbReference>
<dbReference type="GO" id="GO:0098978">
    <property type="term" value="C:glutamatergic synapse"/>
    <property type="evidence" value="ECO:0007669"/>
    <property type="project" value="Ensembl"/>
</dbReference>
<dbReference type="GO" id="GO:0005654">
    <property type="term" value="C:nucleoplasm"/>
    <property type="evidence" value="ECO:0000304"/>
    <property type="project" value="Reactome"/>
</dbReference>
<dbReference type="GO" id="GO:0005634">
    <property type="term" value="C:nucleus"/>
    <property type="evidence" value="ECO:0000314"/>
    <property type="project" value="UniProtKB"/>
</dbReference>
<dbReference type="GO" id="GO:0005886">
    <property type="term" value="C:plasma membrane"/>
    <property type="evidence" value="ECO:0000304"/>
    <property type="project" value="Reactome"/>
</dbReference>
<dbReference type="GO" id="GO:0099524">
    <property type="term" value="C:postsynaptic cytosol"/>
    <property type="evidence" value="ECO:0007669"/>
    <property type="project" value="Ensembl"/>
</dbReference>
<dbReference type="GO" id="GO:0014069">
    <property type="term" value="C:postsynaptic density"/>
    <property type="evidence" value="ECO:0000250"/>
    <property type="project" value="UniProtKB"/>
</dbReference>
<dbReference type="GO" id="GO:0099092">
    <property type="term" value="C:postsynaptic density, intracellular component"/>
    <property type="evidence" value="ECO:0007669"/>
    <property type="project" value="Ensembl"/>
</dbReference>
<dbReference type="GO" id="GO:0030667">
    <property type="term" value="C:secretory granule membrane"/>
    <property type="evidence" value="ECO:0000304"/>
    <property type="project" value="Reactome"/>
</dbReference>
<dbReference type="GO" id="GO:0045202">
    <property type="term" value="C:synapse"/>
    <property type="evidence" value="ECO:0000250"/>
    <property type="project" value="UniProtKB"/>
</dbReference>
<dbReference type="GO" id="GO:0005504">
    <property type="term" value="F:fatty acid binding"/>
    <property type="evidence" value="ECO:0000314"/>
    <property type="project" value="UniProtKB"/>
</dbReference>
<dbReference type="GO" id="GO:0042802">
    <property type="term" value="F:identical protein binding"/>
    <property type="evidence" value="ECO:0000314"/>
    <property type="project" value="UniProtKB"/>
</dbReference>
<dbReference type="GO" id="GO:0008289">
    <property type="term" value="F:lipid binding"/>
    <property type="evidence" value="ECO:0000304"/>
    <property type="project" value="ProtInc"/>
</dbReference>
<dbReference type="GO" id="GO:0005324">
    <property type="term" value="F:long-chain fatty acid transmembrane transporter activity"/>
    <property type="evidence" value="ECO:0000315"/>
    <property type="project" value="ARUK-UCL"/>
</dbReference>
<dbReference type="GO" id="GO:0001972">
    <property type="term" value="F:retinoic acid binding"/>
    <property type="evidence" value="ECO:0007669"/>
    <property type="project" value="Ensembl"/>
</dbReference>
<dbReference type="GO" id="GO:0008544">
    <property type="term" value="P:epidermis development"/>
    <property type="evidence" value="ECO:0000304"/>
    <property type="project" value="ProtInc"/>
</dbReference>
<dbReference type="GO" id="GO:0015908">
    <property type="term" value="P:fatty acid transport"/>
    <property type="evidence" value="ECO:0000318"/>
    <property type="project" value="GO_Central"/>
</dbReference>
<dbReference type="GO" id="GO:0042593">
    <property type="term" value="P:glucose homeostasis"/>
    <property type="evidence" value="ECO:0007669"/>
    <property type="project" value="Ensembl"/>
</dbReference>
<dbReference type="GO" id="GO:0006006">
    <property type="term" value="P:glucose metabolic process"/>
    <property type="evidence" value="ECO:0007669"/>
    <property type="project" value="Ensembl"/>
</dbReference>
<dbReference type="GO" id="GO:0006629">
    <property type="term" value="P:lipid metabolic process"/>
    <property type="evidence" value="ECO:0000304"/>
    <property type="project" value="ProtInc"/>
</dbReference>
<dbReference type="GO" id="GO:1990379">
    <property type="term" value="P:lipid transport across blood-brain barrier"/>
    <property type="evidence" value="ECO:0000315"/>
    <property type="project" value="ARUK-UCL"/>
</dbReference>
<dbReference type="GO" id="GO:0015909">
    <property type="term" value="P:long-chain fatty acid transport"/>
    <property type="evidence" value="ECO:0000315"/>
    <property type="project" value="ARUK-UCL"/>
</dbReference>
<dbReference type="GO" id="GO:0010829">
    <property type="term" value="P:negative regulation of D-glucose transmembrane transport"/>
    <property type="evidence" value="ECO:0007669"/>
    <property type="project" value="Ensembl"/>
</dbReference>
<dbReference type="GO" id="GO:0006656">
    <property type="term" value="P:phosphatidylcholine biosynthetic process"/>
    <property type="evidence" value="ECO:0007669"/>
    <property type="project" value="Ensembl"/>
</dbReference>
<dbReference type="GO" id="GO:0120162">
    <property type="term" value="P:positive regulation of cold-induced thermogenesis"/>
    <property type="evidence" value="ECO:0000250"/>
    <property type="project" value="YuBioLab"/>
</dbReference>
<dbReference type="GO" id="GO:0035360">
    <property type="term" value="P:positive regulation of peroxisome proliferator activated receptor signaling pathway"/>
    <property type="evidence" value="ECO:0007669"/>
    <property type="project" value="Ensembl"/>
</dbReference>
<dbReference type="GO" id="GO:0031392">
    <property type="term" value="P:regulation of prostaglandin biosynthetic process"/>
    <property type="evidence" value="ECO:0007669"/>
    <property type="project" value="Ensembl"/>
</dbReference>
<dbReference type="GO" id="GO:0099178">
    <property type="term" value="P:regulation of retrograde trans-synaptic signaling by endocanabinoid"/>
    <property type="evidence" value="ECO:0000250"/>
    <property type="project" value="UniProtKB"/>
</dbReference>
<dbReference type="GO" id="GO:0051930">
    <property type="term" value="P:regulation of sensory perception of pain"/>
    <property type="evidence" value="ECO:0007669"/>
    <property type="project" value="Ensembl"/>
</dbReference>
<dbReference type="GO" id="GO:0098921">
    <property type="term" value="P:retrograde trans-synaptic signaling by endocannabinoid"/>
    <property type="evidence" value="ECO:0007669"/>
    <property type="project" value="Ensembl"/>
</dbReference>
<dbReference type="CDD" id="cd19468">
    <property type="entry name" value="FABP5"/>
    <property type="match status" value="1"/>
</dbReference>
<dbReference type="FunFam" id="2.40.128.20:FF:000001">
    <property type="entry name" value="Fatty acid-binding protein, adipocyte"/>
    <property type="match status" value="1"/>
</dbReference>
<dbReference type="Gene3D" id="2.40.128.20">
    <property type="match status" value="1"/>
</dbReference>
<dbReference type="InterPro" id="IPR012674">
    <property type="entry name" value="Calycin"/>
</dbReference>
<dbReference type="InterPro" id="IPR000463">
    <property type="entry name" value="Fatty_acid-bd"/>
</dbReference>
<dbReference type="InterPro" id="IPR031259">
    <property type="entry name" value="ILBP"/>
</dbReference>
<dbReference type="InterPro" id="IPR000566">
    <property type="entry name" value="Lipocln_cytosolic_FA-bd_dom"/>
</dbReference>
<dbReference type="PANTHER" id="PTHR11955">
    <property type="entry name" value="FATTY ACID BINDING PROTEIN"/>
    <property type="match status" value="1"/>
</dbReference>
<dbReference type="Pfam" id="PF00061">
    <property type="entry name" value="Lipocalin"/>
    <property type="match status" value="1"/>
</dbReference>
<dbReference type="PRINTS" id="PR00178">
    <property type="entry name" value="FATTYACIDBP"/>
</dbReference>
<dbReference type="SUPFAM" id="SSF50814">
    <property type="entry name" value="Lipocalins"/>
    <property type="match status" value="1"/>
</dbReference>
<dbReference type="PROSITE" id="PS00214">
    <property type="entry name" value="FABP"/>
    <property type="match status" value="1"/>
</dbReference>
<keyword id="KW-0002">3D-structure</keyword>
<keyword id="KW-0007">Acetylation</keyword>
<keyword id="KW-0963">Cytoplasm</keyword>
<keyword id="KW-0903">Direct protein sequencing</keyword>
<keyword id="KW-1015">Disulfide bond</keyword>
<keyword id="KW-0445">Lipid transport</keyword>
<keyword id="KW-0446">Lipid-binding</keyword>
<keyword id="KW-0539">Nucleus</keyword>
<keyword id="KW-0597">Phosphoprotein</keyword>
<keyword id="KW-1267">Proteomics identification</keyword>
<keyword id="KW-1185">Reference proteome</keyword>
<keyword id="KW-0964">Secreted</keyword>
<keyword id="KW-0770">Synapse</keyword>
<keyword id="KW-0813">Transport</keyword>
<proteinExistence type="evidence at protein level"/>
<feature type="initiator methionine" description="Removed" evidence="4 21 23 24 25">
    <location>
        <position position="1"/>
    </location>
</feature>
<feature type="chain" id="PRO_0000067377" description="Fatty acid-binding protein 5">
    <location>
        <begin position="2"/>
        <end position="135"/>
    </location>
</feature>
<feature type="short sequence motif" description="Nuclear localization signal" evidence="8">
    <location>
        <begin position="24"/>
        <end position="34"/>
    </location>
</feature>
<feature type="binding site" evidence="7 16">
    <location>
        <position position="43"/>
    </location>
    <ligand>
        <name>N-eicosanoyl ethanolamine</name>
        <dbReference type="ChEBI" id="CHEBI:85253"/>
    </ligand>
</feature>
<feature type="binding site" evidence="7 16">
    <location>
        <position position="109"/>
    </location>
    <ligand>
        <name>N-eicosanoyl ethanolamine</name>
        <dbReference type="ChEBI" id="CHEBI:85253"/>
    </ligand>
</feature>
<feature type="binding site" evidence="8 18">
    <location>
        <begin position="129"/>
        <end position="131"/>
    </location>
    <ligand>
        <name>(9Z,12Z)-octadecadienoate</name>
        <dbReference type="ChEBI" id="CHEBI:30245"/>
    </ligand>
</feature>
<feature type="binding site" evidence="2 13">
    <location>
        <position position="131"/>
    </location>
    <ligand>
        <name>hexadecanoate</name>
        <dbReference type="ChEBI" id="CHEBI:7896"/>
    </ligand>
</feature>
<feature type="binding site" evidence="7 16">
    <location>
        <position position="131"/>
    </location>
    <ligand>
        <name>N-eicosanoyl ethanolamine</name>
        <dbReference type="ChEBI" id="CHEBI:85253"/>
    </ligand>
</feature>
<feature type="modified residue" description="N-acetylalanine" evidence="4 21 23 24 25">
    <location>
        <position position="2"/>
    </location>
</feature>
<feature type="modified residue" description="N6-acetyllysine" evidence="22">
    <location>
        <position position="17"/>
    </location>
</feature>
<feature type="modified residue" description="Phosphotyrosine" evidence="20">
    <location>
        <position position="131"/>
    </location>
</feature>
<feature type="disulfide bond" evidence="2 3 8 13 14 17 19">
    <location>
        <begin position="120"/>
        <end position="127"/>
    </location>
</feature>
<feature type="mutagenesis site" description="Loss of ligand-induced nuclear import; when associated with A-33 and A-34." evidence="8">
    <original>K</original>
    <variation>A</variation>
    <location>
        <position position="24"/>
    </location>
</feature>
<feature type="mutagenesis site" description="Loss of ligand-induced nuclear import; when associated with A-24 and A-34." evidence="8">
    <original>R</original>
    <variation>A</variation>
    <location>
        <position position="33"/>
    </location>
</feature>
<feature type="mutagenesis site" description="Loss of ligand-induced nuclear import; when associated with A-24 and A-33." evidence="8">
    <original>K</original>
    <variation>A</variation>
    <location>
        <position position="34"/>
    </location>
</feature>
<feature type="helix" evidence="27">
    <location>
        <begin position="4"/>
        <end position="7"/>
    </location>
</feature>
<feature type="strand" evidence="27">
    <location>
        <begin position="9"/>
        <end position="18"/>
    </location>
</feature>
<feature type="helix" evidence="27">
    <location>
        <begin position="19"/>
        <end position="26"/>
    </location>
</feature>
<feature type="helix" evidence="27">
    <location>
        <begin position="30"/>
        <end position="38"/>
    </location>
</feature>
<feature type="strand" evidence="27">
    <location>
        <begin position="42"/>
        <end position="48"/>
    </location>
</feature>
<feature type="strand" evidence="27">
    <location>
        <begin position="51"/>
        <end position="57"/>
    </location>
</feature>
<feature type="strand" evidence="27">
    <location>
        <begin position="62"/>
        <end position="68"/>
    </location>
</feature>
<feature type="strand" evidence="27">
    <location>
        <begin position="73"/>
        <end position="76"/>
    </location>
</feature>
<feature type="strand" evidence="26">
    <location>
        <begin position="78"/>
        <end position="80"/>
    </location>
</feature>
<feature type="strand" evidence="27">
    <location>
        <begin position="82"/>
        <end position="90"/>
    </location>
</feature>
<feature type="strand" evidence="27">
    <location>
        <begin position="93"/>
        <end position="100"/>
    </location>
</feature>
<feature type="strand" evidence="27">
    <location>
        <begin position="103"/>
        <end position="112"/>
    </location>
</feature>
<feature type="strand" evidence="27">
    <location>
        <begin position="115"/>
        <end position="122"/>
    </location>
</feature>
<feature type="strand" evidence="27">
    <location>
        <begin position="125"/>
        <end position="134"/>
    </location>
</feature>
<accession>Q01469</accession>
<accession>B2R4K0</accession>
<gene>
    <name evidence="12" type="primary">FABP5</name>
</gene>
<evidence type="ECO:0000250" key="1">
    <source>
        <dbReference type="UniProtKB" id="Q05816"/>
    </source>
</evidence>
<evidence type="ECO:0000269" key="2">
    <source>
    </source>
</evidence>
<evidence type="ECO:0000269" key="3">
    <source>
    </source>
</evidence>
<evidence type="ECO:0000269" key="4">
    <source>
    </source>
</evidence>
<evidence type="ECO:0000269" key="5">
    <source>
    </source>
</evidence>
<evidence type="ECO:0000269" key="6">
    <source>
    </source>
</evidence>
<evidence type="ECO:0000269" key="7">
    <source>
    </source>
</evidence>
<evidence type="ECO:0000269" key="8">
    <source>
    </source>
</evidence>
<evidence type="ECO:0000269" key="9">
    <source>
    </source>
</evidence>
<evidence type="ECO:0000303" key="10">
    <source>
    </source>
</evidence>
<evidence type="ECO:0000305" key="11"/>
<evidence type="ECO:0000312" key="12">
    <source>
        <dbReference type="HGNC" id="HGNC:3560"/>
    </source>
</evidence>
<evidence type="ECO:0007744" key="13">
    <source>
        <dbReference type="PDB" id="1B56"/>
    </source>
</evidence>
<evidence type="ECO:0007744" key="14">
    <source>
        <dbReference type="PDB" id="1JJJ"/>
    </source>
</evidence>
<evidence type="ECO:0007744" key="15">
    <source>
        <dbReference type="PDB" id="4AZM"/>
    </source>
</evidence>
<evidence type="ECO:0007744" key="16">
    <source>
        <dbReference type="PDB" id="4AZR"/>
    </source>
</evidence>
<evidence type="ECO:0007744" key="17">
    <source>
        <dbReference type="PDB" id="4LKP"/>
    </source>
</evidence>
<evidence type="ECO:0007744" key="18">
    <source>
        <dbReference type="PDB" id="4LKT"/>
    </source>
</evidence>
<evidence type="ECO:0007744" key="19">
    <source>
        <dbReference type="PDB" id="5HZ5"/>
    </source>
</evidence>
<evidence type="ECO:0007744" key="20">
    <source>
    </source>
</evidence>
<evidence type="ECO:0007744" key="21">
    <source>
    </source>
</evidence>
<evidence type="ECO:0007744" key="22">
    <source>
    </source>
</evidence>
<evidence type="ECO:0007744" key="23">
    <source>
    </source>
</evidence>
<evidence type="ECO:0007744" key="24">
    <source>
    </source>
</evidence>
<evidence type="ECO:0007744" key="25">
    <source>
    </source>
</evidence>
<evidence type="ECO:0007829" key="26">
    <source>
        <dbReference type="PDB" id="1JJJ"/>
    </source>
</evidence>
<evidence type="ECO:0007829" key="27">
    <source>
        <dbReference type="PDB" id="7G0E"/>
    </source>
</evidence>
<reference key="1">
    <citation type="journal article" date="1992" name="J. Invest. Dermatol.">
        <title>Molecular cloning and expression of a novel keratinocyte protein (psoriasis-associated fatty acid-binding protein [PA-FABP]) that is highly up-regulated in psoriatic skin and that shares similarity to fatty acid-binding proteins.</title>
        <authorList>
            <person name="Madsen P.S."/>
            <person name="Rasmussen H.H."/>
            <person name="Leffers H."/>
            <person name="Honore B."/>
            <person name="Celis J.E."/>
        </authorList>
    </citation>
    <scope>NUCLEOTIDE SEQUENCE [MRNA]</scope>
    <scope>PARTIAL PROTEIN SEQUENCE</scope>
    <source>
        <tissue>Keratinocyte</tissue>
    </source>
</reference>
<reference key="2">
    <citation type="submission" date="2003-05" db="EMBL/GenBank/DDBJ databases">
        <title>Cloning of human full-length CDSs in BD Creator(TM) system donor vector.</title>
        <authorList>
            <person name="Kalnine N."/>
            <person name="Chen X."/>
            <person name="Rolfs A."/>
            <person name="Halleck A."/>
            <person name="Hines L."/>
            <person name="Eisenstein S."/>
            <person name="Koundinya M."/>
            <person name="Raphael J."/>
            <person name="Moreira D."/>
            <person name="Kelley T."/>
            <person name="LaBaer J."/>
            <person name="Lin Y."/>
            <person name="Phelan M."/>
            <person name="Farmer A."/>
        </authorList>
    </citation>
    <scope>NUCLEOTIDE SEQUENCE [LARGE SCALE MRNA]</scope>
</reference>
<reference key="3">
    <citation type="journal article" date="2004" name="Nat. Genet.">
        <title>Complete sequencing and characterization of 21,243 full-length human cDNAs.</title>
        <authorList>
            <person name="Ota T."/>
            <person name="Suzuki Y."/>
            <person name="Nishikawa T."/>
            <person name="Otsuki T."/>
            <person name="Sugiyama T."/>
            <person name="Irie R."/>
            <person name="Wakamatsu A."/>
            <person name="Hayashi K."/>
            <person name="Sato H."/>
            <person name="Nagai K."/>
            <person name="Kimura K."/>
            <person name="Makita H."/>
            <person name="Sekine M."/>
            <person name="Obayashi M."/>
            <person name="Nishi T."/>
            <person name="Shibahara T."/>
            <person name="Tanaka T."/>
            <person name="Ishii S."/>
            <person name="Yamamoto J."/>
            <person name="Saito K."/>
            <person name="Kawai Y."/>
            <person name="Isono Y."/>
            <person name="Nakamura Y."/>
            <person name="Nagahari K."/>
            <person name="Murakami K."/>
            <person name="Yasuda T."/>
            <person name="Iwayanagi T."/>
            <person name="Wagatsuma M."/>
            <person name="Shiratori A."/>
            <person name="Sudo H."/>
            <person name="Hosoiri T."/>
            <person name="Kaku Y."/>
            <person name="Kodaira H."/>
            <person name="Kondo H."/>
            <person name="Sugawara M."/>
            <person name="Takahashi M."/>
            <person name="Kanda K."/>
            <person name="Yokoi T."/>
            <person name="Furuya T."/>
            <person name="Kikkawa E."/>
            <person name="Omura Y."/>
            <person name="Abe K."/>
            <person name="Kamihara K."/>
            <person name="Katsuta N."/>
            <person name="Sato K."/>
            <person name="Tanikawa M."/>
            <person name="Yamazaki M."/>
            <person name="Ninomiya K."/>
            <person name="Ishibashi T."/>
            <person name="Yamashita H."/>
            <person name="Murakawa K."/>
            <person name="Fujimori K."/>
            <person name="Tanai H."/>
            <person name="Kimata M."/>
            <person name="Watanabe M."/>
            <person name="Hiraoka S."/>
            <person name="Chiba Y."/>
            <person name="Ishida S."/>
            <person name="Ono Y."/>
            <person name="Takiguchi S."/>
            <person name="Watanabe S."/>
            <person name="Yosida M."/>
            <person name="Hotuta T."/>
            <person name="Kusano J."/>
            <person name="Kanehori K."/>
            <person name="Takahashi-Fujii A."/>
            <person name="Hara H."/>
            <person name="Tanase T.-O."/>
            <person name="Nomura Y."/>
            <person name="Togiya S."/>
            <person name="Komai F."/>
            <person name="Hara R."/>
            <person name="Takeuchi K."/>
            <person name="Arita M."/>
            <person name="Imose N."/>
            <person name="Musashino K."/>
            <person name="Yuuki H."/>
            <person name="Oshima A."/>
            <person name="Sasaki N."/>
            <person name="Aotsuka S."/>
            <person name="Yoshikawa Y."/>
            <person name="Matsunawa H."/>
            <person name="Ichihara T."/>
            <person name="Shiohata N."/>
            <person name="Sano S."/>
            <person name="Moriya S."/>
            <person name="Momiyama H."/>
            <person name="Satoh N."/>
            <person name="Takami S."/>
            <person name="Terashima Y."/>
            <person name="Suzuki O."/>
            <person name="Nakagawa S."/>
            <person name="Senoh A."/>
            <person name="Mizoguchi H."/>
            <person name="Goto Y."/>
            <person name="Shimizu F."/>
            <person name="Wakebe H."/>
            <person name="Hishigaki H."/>
            <person name="Watanabe T."/>
            <person name="Sugiyama A."/>
            <person name="Takemoto M."/>
            <person name="Kawakami B."/>
            <person name="Yamazaki M."/>
            <person name="Watanabe K."/>
            <person name="Kumagai A."/>
            <person name="Itakura S."/>
            <person name="Fukuzumi Y."/>
            <person name="Fujimori Y."/>
            <person name="Komiyama M."/>
            <person name="Tashiro H."/>
            <person name="Tanigami A."/>
            <person name="Fujiwara T."/>
            <person name="Ono T."/>
            <person name="Yamada K."/>
            <person name="Fujii Y."/>
            <person name="Ozaki K."/>
            <person name="Hirao M."/>
            <person name="Ohmori Y."/>
            <person name="Kawabata A."/>
            <person name="Hikiji T."/>
            <person name="Kobatake N."/>
            <person name="Inagaki H."/>
            <person name="Ikema Y."/>
            <person name="Okamoto S."/>
            <person name="Okitani R."/>
            <person name="Kawakami T."/>
            <person name="Noguchi S."/>
            <person name="Itoh T."/>
            <person name="Shigeta K."/>
            <person name="Senba T."/>
            <person name="Matsumura K."/>
            <person name="Nakajima Y."/>
            <person name="Mizuno T."/>
            <person name="Morinaga M."/>
            <person name="Sasaki M."/>
            <person name="Togashi T."/>
            <person name="Oyama M."/>
            <person name="Hata H."/>
            <person name="Watanabe M."/>
            <person name="Komatsu T."/>
            <person name="Mizushima-Sugano J."/>
            <person name="Satoh T."/>
            <person name="Shirai Y."/>
            <person name="Takahashi Y."/>
            <person name="Nakagawa K."/>
            <person name="Okumura K."/>
            <person name="Nagase T."/>
            <person name="Nomura N."/>
            <person name="Kikuchi H."/>
            <person name="Masuho Y."/>
            <person name="Yamashita R."/>
            <person name="Nakai K."/>
            <person name="Yada T."/>
            <person name="Nakamura Y."/>
            <person name="Ohara O."/>
            <person name="Isogai T."/>
            <person name="Sugano S."/>
        </authorList>
    </citation>
    <scope>NUCLEOTIDE SEQUENCE [LARGE SCALE MRNA]</scope>
    <source>
        <tissue>Tongue</tissue>
    </source>
</reference>
<reference key="4">
    <citation type="submission" date="2005-07" db="EMBL/GenBank/DDBJ databases">
        <authorList>
            <person name="Mural R.J."/>
            <person name="Istrail S."/>
            <person name="Sutton G.G."/>
            <person name="Florea L."/>
            <person name="Halpern A.L."/>
            <person name="Mobarry C.M."/>
            <person name="Lippert R."/>
            <person name="Walenz B."/>
            <person name="Shatkay H."/>
            <person name="Dew I."/>
            <person name="Miller J.R."/>
            <person name="Flanigan M.J."/>
            <person name="Edwards N.J."/>
            <person name="Bolanos R."/>
            <person name="Fasulo D."/>
            <person name="Halldorsson B.V."/>
            <person name="Hannenhalli S."/>
            <person name="Turner R."/>
            <person name="Yooseph S."/>
            <person name="Lu F."/>
            <person name="Nusskern D.R."/>
            <person name="Shue B.C."/>
            <person name="Zheng X.H."/>
            <person name="Zhong F."/>
            <person name="Delcher A.L."/>
            <person name="Huson D.H."/>
            <person name="Kravitz S.A."/>
            <person name="Mouchard L."/>
            <person name="Reinert K."/>
            <person name="Remington K.A."/>
            <person name="Clark A.G."/>
            <person name="Waterman M.S."/>
            <person name="Eichler E.E."/>
            <person name="Adams M.D."/>
            <person name="Hunkapiller M.W."/>
            <person name="Myers E.W."/>
            <person name="Venter J.C."/>
        </authorList>
    </citation>
    <scope>NUCLEOTIDE SEQUENCE [LARGE SCALE GENOMIC DNA]</scope>
</reference>
<reference key="5">
    <citation type="journal article" date="2004" name="Genome Res.">
        <title>The status, quality, and expansion of the NIH full-length cDNA project: the Mammalian Gene Collection (MGC).</title>
        <authorList>
            <consortium name="The MGC Project Team"/>
        </authorList>
    </citation>
    <scope>NUCLEOTIDE SEQUENCE [LARGE SCALE MRNA]</scope>
    <source>
        <tissue>Ovary</tissue>
    </source>
</reference>
<reference key="6">
    <citation type="journal article" date="2003" name="Nat. Biotechnol.">
        <title>Exploring proteomes and analyzing protein processing by mass spectrometric identification of sorted N-terminal peptides.</title>
        <authorList>
            <person name="Gevaert K."/>
            <person name="Goethals M."/>
            <person name="Martens L."/>
            <person name="Van Damme J."/>
            <person name="Staes A."/>
            <person name="Thomas G.R."/>
            <person name="Vandekerckhove J."/>
        </authorList>
    </citation>
    <scope>PROTEIN SEQUENCE OF 2-10</scope>
    <scope>ACETYLATION AT ALA-2</scope>
</reference>
<reference key="7">
    <citation type="submission" date="2008-12" db="UniProtKB">
        <authorList>
            <person name="Lubec G."/>
            <person name="Chen W.-Q."/>
            <person name="Sun Y."/>
        </authorList>
    </citation>
    <scope>PROTEIN SEQUENCE OF 18-33; 35-50; 62-103 AND 116-129</scope>
    <scope>IDENTIFICATION BY MASS SPECTROMETRY</scope>
    <source>
        <tissue>Fetal brain cortex</tissue>
    </source>
</reference>
<reference key="8">
    <citation type="journal article" date="1992" name="Electrophoresis">
        <title>Microsequences of 145 proteins recorded in the two-dimensional gel protein database of normal human epidermal keratinocytes.</title>
        <authorList>
            <person name="Rasmussen H.H."/>
            <person name="van Damme J."/>
            <person name="Puype M."/>
            <person name="Gesser B."/>
            <person name="Celis J.E."/>
            <person name="Vandekerckhove J."/>
        </authorList>
    </citation>
    <scope>PROTEIN SEQUENCE OF 25-33; 39-50; 62-71; 83-101 AND 120-129</scope>
    <source>
        <tissue>Keratinocyte</tissue>
    </source>
</reference>
<reference key="9">
    <citation type="journal article" date="1994" name="Biochem. J.">
        <title>Purification and characterization of the human epidermal fatty acid-binding protein: localization during epidermal cell differentiation in vivo and in vitro.</title>
        <authorList>
            <person name="Siegenthaler G."/>
            <person name="Hotz R."/>
            <person name="Chatellard-Gruaz D."/>
            <person name="Didierjean L."/>
            <person name="Hellman U."/>
            <person name="Saurat J.-H."/>
        </authorList>
    </citation>
    <scope>PROTEIN SEQUENCE OF 67-72 AND 104-110</scope>
    <scope>CHARACTERIZATION</scope>
    <scope>SUBCELLULAR LOCATION</scope>
</reference>
<reference key="10">
    <citation type="journal article" date="2005" name="Nat. Biotechnol.">
        <title>Immunoaffinity profiling of tyrosine phosphorylation in cancer cells.</title>
        <authorList>
            <person name="Rush J."/>
            <person name="Moritz A."/>
            <person name="Lee K.A."/>
            <person name="Guo A."/>
            <person name="Goss V.L."/>
            <person name="Spek E.J."/>
            <person name="Zhang H."/>
            <person name="Zha X.-M."/>
            <person name="Polakiewicz R.D."/>
            <person name="Comb M.J."/>
        </authorList>
    </citation>
    <scope>PHOSPHORYLATION [LARGE SCALE ANALYSIS] AT TYR-131</scope>
    <scope>IDENTIFICATION BY MASS SPECTROMETRY [LARGE SCALE ANALYSIS]</scope>
</reference>
<reference key="11">
    <citation type="journal article" date="2009" name="Anal. Chem.">
        <title>Lys-N and trypsin cover complementary parts of the phosphoproteome in a refined SCX-based approach.</title>
        <authorList>
            <person name="Gauci S."/>
            <person name="Helbig A.O."/>
            <person name="Slijper M."/>
            <person name="Krijgsveld J."/>
            <person name="Heck A.J."/>
            <person name="Mohammed S."/>
        </authorList>
    </citation>
    <scope>ACETYLATION [LARGE SCALE ANALYSIS] AT ALA-2</scope>
    <scope>CLEAVAGE OF INITIATOR METHIONINE [LARGE SCALE ANALYSIS]</scope>
    <scope>IDENTIFICATION BY MASS SPECTROMETRY [LARGE SCALE ANALYSIS]</scope>
</reference>
<reference key="12">
    <citation type="journal article" date="2009" name="Science">
        <title>Lysine acetylation targets protein complexes and co-regulates major cellular functions.</title>
        <authorList>
            <person name="Choudhary C."/>
            <person name="Kumar C."/>
            <person name="Gnad F."/>
            <person name="Nielsen M.L."/>
            <person name="Rehman M."/>
            <person name="Walther T.C."/>
            <person name="Olsen J.V."/>
            <person name="Mann M."/>
        </authorList>
    </citation>
    <scope>ACETYLATION [LARGE SCALE ANALYSIS] AT LYS-17</scope>
    <scope>IDENTIFICATION BY MASS SPECTROMETRY [LARGE SCALE ANALYSIS]</scope>
</reference>
<reference key="13">
    <citation type="journal article" date="2011" name="BMC Syst. Biol.">
        <title>Initial characterization of the human central proteome.</title>
        <authorList>
            <person name="Burkard T.R."/>
            <person name="Planyavsky M."/>
            <person name="Kaupe I."/>
            <person name="Breitwieser F.P."/>
            <person name="Buerckstuemmer T."/>
            <person name="Bennett K.L."/>
            <person name="Superti-Furga G."/>
            <person name="Colinge J."/>
        </authorList>
    </citation>
    <scope>IDENTIFICATION BY MASS SPECTROMETRY [LARGE SCALE ANALYSIS]</scope>
</reference>
<reference key="14">
    <citation type="journal article" date="2011" name="J. Neurochem.">
        <title>Fatty acid transport protein expression in human brain and potential role in fatty acid transport across human brain microvessel endothelial cells.</title>
        <authorList>
            <person name="Mitchell R.W."/>
            <person name="On N.H."/>
            <person name="Del Bigio M.R."/>
            <person name="Miller D.W."/>
            <person name="Hatch G.M."/>
        </authorList>
    </citation>
    <scope>FUNCTION</scope>
    <scope>CATALYTIC ACTIVITY</scope>
    <scope>TISSUE SPECIFICITY</scope>
</reference>
<reference key="15">
    <citation type="journal article" date="2012" name="J. Biol. Chem.">
        <title>Fatty acid-binding proteins transport N-acylethanolamines to nuclear receptors and are targets of endocannabinoid transport inhibitors.</title>
        <authorList>
            <person name="Kaczocha M."/>
            <person name="Vivieca S."/>
            <person name="Sun J."/>
            <person name="Glaser S.T."/>
            <person name="Deutsch D.G."/>
        </authorList>
    </citation>
    <scope>FUNCTION</scope>
</reference>
<reference key="16">
    <citation type="journal article" date="2012" name="Mol. Cell. Proteomics">
        <title>Comparative large-scale characterisation of plant vs. mammal proteins reveals similar and idiosyncratic N-alpha acetylation features.</title>
        <authorList>
            <person name="Bienvenut W.V."/>
            <person name="Sumpton D."/>
            <person name="Martinez A."/>
            <person name="Lilla S."/>
            <person name="Espagne C."/>
            <person name="Meinnel T."/>
            <person name="Giglione C."/>
        </authorList>
    </citation>
    <scope>ACETYLATION [LARGE SCALE ANALYSIS] AT ALA-2</scope>
    <scope>CLEAVAGE OF INITIATOR METHIONINE [LARGE SCALE ANALYSIS]</scope>
    <scope>IDENTIFICATION BY MASS SPECTROMETRY [LARGE SCALE ANALYSIS]</scope>
</reference>
<reference key="17">
    <citation type="journal article" date="2012" name="Proc. Natl. Acad. Sci. U.S.A.">
        <title>N-terminal acetylome analyses and functional insights of the N-terminal acetyltransferase NatB.</title>
        <authorList>
            <person name="Van Damme P."/>
            <person name="Lasa M."/>
            <person name="Polevoda B."/>
            <person name="Gazquez C."/>
            <person name="Elosegui-Artola A."/>
            <person name="Kim D.S."/>
            <person name="De Juan-Pardo E."/>
            <person name="Demeyer K."/>
            <person name="Hole K."/>
            <person name="Larrea E."/>
            <person name="Timmerman E."/>
            <person name="Prieto J."/>
            <person name="Arnesen T."/>
            <person name="Sherman F."/>
            <person name="Gevaert K."/>
            <person name="Aldabe R."/>
        </authorList>
    </citation>
    <scope>ACETYLATION [LARGE SCALE ANALYSIS] AT ALA-2</scope>
    <scope>CLEAVAGE OF INITIATOR METHIONINE [LARGE SCALE ANALYSIS]</scope>
    <scope>IDENTIFICATION BY MASS SPECTROMETRY [LARGE SCALE ANALYSIS]</scope>
</reference>
<reference key="18">
    <citation type="journal article" date="2015" name="Proteomics">
        <title>N-terminome analysis of the human mitochondrial proteome.</title>
        <authorList>
            <person name="Vaca Jacome A.S."/>
            <person name="Rabilloud T."/>
            <person name="Schaeffer-Reiss C."/>
            <person name="Rompais M."/>
            <person name="Ayoub D."/>
            <person name="Lane L."/>
            <person name="Bairoch A."/>
            <person name="Van Dorsselaer A."/>
            <person name="Carapito C."/>
        </authorList>
    </citation>
    <scope>ACETYLATION [LARGE SCALE ANALYSIS] AT ALA-2</scope>
    <scope>CLEAVAGE OF INITIATOR METHIONINE [LARGE SCALE ANALYSIS]</scope>
    <scope>IDENTIFICATION BY MASS SPECTROMETRY [LARGE SCALE ANALYSIS]</scope>
</reference>
<reference evidence="13" key="19">
    <citation type="journal article" date="1999" name="Biochemistry">
        <title>Expression, purification and crystal structure determination of recombinant human epidermal-type fatty acid-binding protein.</title>
        <authorList>
            <person name="Hohoff C."/>
            <person name="Borchers T."/>
            <person name="Rustow B."/>
            <person name="Spener F."/>
            <person name="van Tilbeurgh H."/>
        </authorList>
    </citation>
    <scope>X-RAY CRYSTALLOGRAPHY (2.05 ANGSTROMS) IN COMPLEX WITH PALMITATE</scope>
    <scope>DISULFIDE BOND</scope>
</reference>
<reference evidence="14" key="20">
    <citation type="journal article" date="2002" name="Biochem. J.">
        <title>Solution structure and backbone dynamics of human epidermal-type fatty acid-binding protein (E-FABP).</title>
        <authorList>
            <person name="Gutierrez-Gonzalez L.H."/>
            <person name="Ludwig C."/>
            <person name="Hohoff C."/>
            <person name="Rademacher M."/>
            <person name="Hanhoff T."/>
            <person name="Rueterjans H."/>
            <person name="Spener F."/>
            <person name="Luecke C."/>
        </authorList>
    </citation>
    <scope>STRUCTURE BY NMR</scope>
    <scope>DISULFIDE BOND</scope>
</reference>
<reference evidence="17 18" key="21">
    <citation type="journal article" date="2014" name="J. Biol. Chem.">
        <title>Structural basis for ligand regulation of the fatty acid-binding protein 5, peroxisome proliferator-activated receptor beta/delta (FABP5-PPARbeta/delta) signaling pathway.</title>
        <authorList>
            <person name="Armstrong E.H."/>
            <person name="Goswami D."/>
            <person name="Griffin P.R."/>
            <person name="Noy N."/>
            <person name="Ortlund E.A."/>
        </authorList>
    </citation>
    <scope>X-RAY CRYSTALLOGRAPHY (1.67 ANGSTROMS) IN COMPLEX WITH LINOLEATE</scope>
    <scope>DISULFIDE BONDS</scope>
    <scope>SUBCELLULAR LOCATION</scope>
    <scope>MUTAGENESIS OF LYS-24; ARG-33 AND LYS-34</scope>
    <scope>NUCLEAR LOCALIZATION SIGNAL</scope>
</reference>
<reference evidence="15 16" key="22">
    <citation type="journal article" date="2014" name="Acta Crystallogr. D">
        <title>Crystallographic study of FABP5 as an intracellular endocannabinoid transporter.</title>
        <authorList>
            <person name="Sanson B."/>
            <person name="Wang T."/>
            <person name="Sun J."/>
            <person name="Wang L."/>
            <person name="Kaczocha M."/>
            <person name="Ojima I."/>
            <person name="Deutsch D."/>
            <person name="Li H."/>
        </authorList>
    </citation>
    <scope>X-RAY CRYSTALLOGRAPHY (2.75 ANGSTROMS)</scope>
    <scope>SUBUNIT</scope>
    <scope>IN COMPLEX WITH N-ARACHIDONOYLETHANOLAMIDE OR SYNTHETIC INHIBITOR BMS-309403</scope>
</reference>
<name>FABP5_HUMAN</name>
<sequence>MATVQQLEGRWRLVDSKGFDEYMKELGVGIALRKMGAMAKPDCIITCDGKNLTIKTESTLKTTQFSCTLGEKFEETTADGRKTQTVCNFTDGALVQHQEWDGKESTITRKLKDGKLVVECVMNNVTCTRIYEKVE</sequence>
<organism>
    <name type="scientific">Homo sapiens</name>
    <name type="common">Human</name>
    <dbReference type="NCBI Taxonomy" id="9606"/>
    <lineage>
        <taxon>Eukaryota</taxon>
        <taxon>Metazoa</taxon>
        <taxon>Chordata</taxon>
        <taxon>Craniata</taxon>
        <taxon>Vertebrata</taxon>
        <taxon>Euteleostomi</taxon>
        <taxon>Mammalia</taxon>
        <taxon>Eutheria</taxon>
        <taxon>Euarchontoglires</taxon>
        <taxon>Primates</taxon>
        <taxon>Haplorrhini</taxon>
        <taxon>Catarrhini</taxon>
        <taxon>Hominidae</taxon>
        <taxon>Homo</taxon>
    </lineage>
</organism>
<protein>
    <recommendedName>
        <fullName evidence="11">Fatty acid-binding protein 5</fullName>
    </recommendedName>
    <alternativeName>
        <fullName evidence="10">Epidermal-type fatty acid-binding protein</fullName>
        <shortName evidence="10">E-FABP</shortName>
    </alternativeName>
    <alternativeName>
        <fullName>Fatty acid-binding protein, epidermal</fullName>
    </alternativeName>
    <alternativeName>
        <fullName>Psoriasis-associated fatty acid-binding protein homolog</fullName>
        <shortName>PA-FABP</shortName>
    </alternativeName>
</protein>